<reference evidence="5" key="1">
    <citation type="journal article" date="2011" name="ACS Chem. Biol.">
        <title>The discovery of cyclotides in the Fabaceae plant family provides new insights into the cyclization, evolution and distribution of circular proteins.</title>
        <authorList>
            <person name="Poth A.G."/>
            <person name="Colgrave M.L."/>
            <person name="Philip R."/>
            <person name="Kerenga B."/>
            <person name="Daly N.L."/>
            <person name="Anderson M."/>
            <person name="Craik D.J."/>
        </authorList>
    </citation>
    <scope>PROTEIN SEQUENCE</scope>
    <scope>DISULFIDE BONDS</scope>
    <scope>CYCLIZATION</scope>
    <scope>MASS SPECTROMETRY</scope>
    <source>
        <tissue evidence="3">Seed</tissue>
    </source>
</reference>
<dbReference type="SMR" id="P86847"/>
<dbReference type="GO" id="GO:0006952">
    <property type="term" value="P:defense response"/>
    <property type="evidence" value="ECO:0007669"/>
    <property type="project" value="UniProtKB-KW"/>
</dbReference>
<dbReference type="InterPro" id="IPR005535">
    <property type="entry name" value="Cyclotide"/>
</dbReference>
<dbReference type="InterPro" id="IPR012323">
    <property type="entry name" value="Cyclotide_bracelet_CS"/>
</dbReference>
<dbReference type="InterPro" id="IPR036146">
    <property type="entry name" value="Cyclotide_sf"/>
</dbReference>
<dbReference type="Pfam" id="PF03784">
    <property type="entry name" value="Cyclotide"/>
    <property type="match status" value="1"/>
</dbReference>
<dbReference type="PIRSF" id="PIRSF037891">
    <property type="entry name" value="Cycloviolacin"/>
    <property type="match status" value="1"/>
</dbReference>
<dbReference type="SUPFAM" id="SSF57038">
    <property type="entry name" value="Cyclotides"/>
    <property type="match status" value="1"/>
</dbReference>
<dbReference type="PROSITE" id="PS51052">
    <property type="entry name" value="CYCLOTIDE"/>
    <property type="match status" value="1"/>
</dbReference>
<dbReference type="PROSITE" id="PS60008">
    <property type="entry name" value="CYCLOTIDE_BRACELET"/>
    <property type="match status" value="1"/>
</dbReference>
<comment type="function">
    <text evidence="1 2">Probably participates in a plant defense mechanism.</text>
</comment>
<comment type="domain">
    <text evidence="5">The presence of a 'disulfide through disulfide knot' structurally defines this protein as a knottin.</text>
</comment>
<comment type="PTM">
    <text evidence="3">Contains 3 disulfide bonds.</text>
</comment>
<comment type="PTM">
    <text evidence="2 3">This is a cyclic peptide.</text>
</comment>
<comment type="mass spectrometry" mass="3126.42" method="Electrospray" evidence="3"/>
<comment type="similarity">
    <text evidence="2">Belongs to the cyclotide family. Bracelet subfamily.</text>
</comment>
<comment type="caution">
    <text evidence="5">This peptide is cyclic. The start position was chosen by similarity to cyclotide cter-A for which the DNA sequence is known.</text>
</comment>
<sequence length="30" mass="3153">GLPCGESCVFIPCITTVVGCSCKNKVCYNN</sequence>
<proteinExistence type="evidence at protein level"/>
<accession>P86847</accession>
<organism>
    <name type="scientific">Clitoria ternatea</name>
    <name type="common">Butterfly pea</name>
    <dbReference type="NCBI Taxonomy" id="43366"/>
    <lineage>
        <taxon>Eukaryota</taxon>
        <taxon>Viridiplantae</taxon>
        <taxon>Streptophyta</taxon>
        <taxon>Embryophyta</taxon>
        <taxon>Tracheophyta</taxon>
        <taxon>Spermatophyta</taxon>
        <taxon>Magnoliopsida</taxon>
        <taxon>eudicotyledons</taxon>
        <taxon>Gunneridae</taxon>
        <taxon>Pentapetalae</taxon>
        <taxon>rosids</taxon>
        <taxon>fabids</taxon>
        <taxon>Fabales</taxon>
        <taxon>Fabaceae</taxon>
        <taxon>Papilionoideae</taxon>
        <taxon>50 kb inversion clade</taxon>
        <taxon>NPAAA clade</taxon>
        <taxon>indigoferoid/millettioid clade</taxon>
        <taxon>Phaseoleae</taxon>
        <taxon>Clitoria</taxon>
    </lineage>
</organism>
<feature type="peptide" id="PRO_0000405858" description="Cyclotide cter-G" evidence="2 3">
    <location>
        <begin position="1"/>
        <end position="30"/>
    </location>
</feature>
<feature type="disulfide bond" evidence="1 2">
    <location>
        <begin position="4"/>
        <end position="20"/>
    </location>
</feature>
<feature type="disulfide bond" evidence="1 2">
    <location>
        <begin position="8"/>
        <end position="22"/>
    </location>
</feature>
<feature type="disulfide bond" evidence="1 2">
    <location>
        <begin position="13"/>
        <end position="27"/>
    </location>
</feature>
<feature type="cross-link" description="Cyclopeptide (Gly-Asn)" evidence="4">
    <location>
        <begin position="1"/>
        <end position="30"/>
    </location>
</feature>
<protein>
    <recommendedName>
        <fullName evidence="4">Cyclotide cter-G</fullName>
    </recommendedName>
</protein>
<keyword id="KW-0903">Direct protein sequencing</keyword>
<keyword id="KW-1015">Disulfide bond</keyword>
<keyword id="KW-0960">Knottin</keyword>
<keyword id="KW-0611">Plant defense</keyword>
<evidence type="ECO:0000250" key="1">
    <source>
        <dbReference type="UniProtKB" id="P56254"/>
    </source>
</evidence>
<evidence type="ECO:0000255" key="2">
    <source>
        <dbReference type="PROSITE-ProRule" id="PRU00395"/>
    </source>
</evidence>
<evidence type="ECO:0000269" key="3">
    <source>
    </source>
</evidence>
<evidence type="ECO:0000303" key="4">
    <source>
    </source>
</evidence>
<evidence type="ECO:0000305" key="5"/>
<name>CYCG_CLITE</name>